<feature type="signal peptide" evidence="4">
    <location>
        <begin position="1"/>
        <end position="20"/>
    </location>
</feature>
<feature type="chain" id="PRO_0000419449" description="Monofunctional chorismate mutase" evidence="4">
    <location>
        <begin position="21"/>
        <end position="181"/>
    </location>
</feature>
<feature type="domain" description="Chorismate mutase" evidence="3 6">
    <location>
        <begin position="21"/>
        <end position="102"/>
    </location>
</feature>
<feature type="binding site" evidence="1">
    <location>
        <position position="38"/>
    </location>
    <ligand>
        <name>substrate</name>
    </ligand>
</feature>
<feature type="binding site" evidence="1">
    <location>
        <position position="49"/>
    </location>
    <ligand>
        <name>substrate</name>
    </ligand>
</feature>
<feature type="binding site" evidence="1">
    <location>
        <position position="58"/>
    </location>
    <ligand>
        <name>substrate</name>
    </ligand>
</feature>
<feature type="binding site" evidence="1">
    <location>
        <position position="62"/>
    </location>
    <ligand>
        <name>substrate</name>
    </ligand>
</feature>
<feature type="binding site" evidence="1">
    <location>
        <position position="98"/>
    </location>
    <ligand>
        <name>substrate</name>
    </ligand>
</feature>
<evidence type="ECO:0000250" key="1">
    <source>
        <dbReference type="UniProtKB" id="P0A9J8"/>
    </source>
</evidence>
<evidence type="ECO:0000250" key="2">
    <source>
        <dbReference type="UniProtKB" id="P42517"/>
    </source>
</evidence>
<evidence type="ECO:0000255" key="3">
    <source>
        <dbReference type="PROSITE-ProRule" id="PRU00515"/>
    </source>
</evidence>
<evidence type="ECO:0000269" key="4">
    <source>
    </source>
</evidence>
<evidence type="ECO:0000303" key="5">
    <source>
    </source>
</evidence>
<evidence type="ECO:0000305" key="6"/>
<evidence type="ECO:0000312" key="7">
    <source>
        <dbReference type="EMBL" id="AAK91555.1"/>
    </source>
</evidence>
<accession>Q93LJ4</accession>
<accession>Q7CQP9</accession>
<name>CHMU_SALTM</name>
<organism>
    <name type="scientific">Salmonella typhimurium</name>
    <dbReference type="NCBI Taxonomy" id="90371"/>
    <lineage>
        <taxon>Bacteria</taxon>
        <taxon>Pseudomonadati</taxon>
        <taxon>Pseudomonadota</taxon>
        <taxon>Gammaproteobacteria</taxon>
        <taxon>Enterobacterales</taxon>
        <taxon>Enterobacteriaceae</taxon>
        <taxon>Salmonella</taxon>
    </lineage>
</organism>
<gene>
    <name evidence="5" type="primary">aroQ</name>
</gene>
<comment type="function">
    <text evidence="1">Catalyzes the Claisen rearrangement of chorismate to prephenate.</text>
</comment>
<comment type="catalytic activity">
    <reaction evidence="4">
        <text>chorismate = prephenate</text>
        <dbReference type="Rhea" id="RHEA:13897"/>
        <dbReference type="ChEBI" id="CHEBI:29748"/>
        <dbReference type="ChEBI" id="CHEBI:29934"/>
        <dbReference type="EC" id="5.4.99.5"/>
    </reaction>
</comment>
<comment type="biophysicochemical properties">
    <kinetics>
        <KM evidence="4">142 uM for chorismate (at 32 degrees Celsius)</KM>
        <text evidence="4">kcat is 8.9 sec(-1) for chorismate.</text>
    </kinetics>
</comment>
<comment type="pathway">
    <text evidence="2">Metabolic intermediate biosynthesis; prephenate biosynthesis; prephenate from chorismate: step 1/1.</text>
</comment>
<comment type="subcellular location">
    <subcellularLocation>
        <location evidence="4">Periplasm</location>
    </subcellularLocation>
</comment>
<reference evidence="6 7" key="1">
    <citation type="journal article" date="2001" name="Genome Biol.">
        <title>The emerging periplasm-localized subclass of AroQ chorismate mutases, exemplified by those from Salmonella typhimurium and Pseudomonas aeruginosa.</title>
        <authorList>
            <person name="Calhoun D.H."/>
            <person name="Bonner C.A."/>
            <person name="Gu W."/>
            <person name="Xie G."/>
            <person name="Jensen R.A."/>
        </authorList>
    </citation>
    <scope>NUCLEOTIDE SEQUENCE [GENOMIC DNA]</scope>
    <scope>PROTEIN SEQUENCE OF 21-30</scope>
    <scope>CATALYTIC ACTIVITY</scope>
    <scope>BIOPHYSICOCHEMICAL PROPERTIES</scope>
    <scope>SUBCELLULAR LOCATION</scope>
    <source>
        <strain evidence="7">LT2</strain>
    </source>
</reference>
<sequence length="181" mass="20582">MIRHIAIFLCSLLMCSTTFADSVTSVSLGALLTALNERMLLMKDVAAYKMKHHLPIEDFTREQNVFAEAEEEAKNNGLDPHSITPFIRSLMDASKAIQYRYLAQWRTGSEPSFPIQTLSVTRQRIRQLDNQMLIIISQRLMVGAFSHDDMVWLRAQFNAPNLNESDISNVLAALSLVRRAR</sequence>
<protein>
    <recommendedName>
        <fullName evidence="2 7">Monofunctional chorismate mutase</fullName>
        <ecNumber evidence="4">5.4.99.5</ecNumber>
    </recommendedName>
</protein>
<proteinExistence type="evidence at protein level"/>
<dbReference type="EC" id="5.4.99.5" evidence="4"/>
<dbReference type="EMBL" id="AY039113">
    <property type="protein sequence ID" value="AAK91555.1"/>
    <property type="molecule type" value="Genomic_DNA"/>
</dbReference>
<dbReference type="RefSeq" id="WP_000617985.1">
    <property type="nucleotide sequence ID" value="NZ_WXYU01000003.1"/>
</dbReference>
<dbReference type="SMR" id="Q93LJ4"/>
<dbReference type="eggNOG" id="COG1605">
    <property type="taxonomic scope" value="Bacteria"/>
</dbReference>
<dbReference type="OMA" id="RSAPDCP"/>
<dbReference type="UniPathway" id="UPA00120">
    <property type="reaction ID" value="UER00203"/>
</dbReference>
<dbReference type="GO" id="GO:0042597">
    <property type="term" value="C:periplasmic space"/>
    <property type="evidence" value="ECO:0000314"/>
    <property type="project" value="UniProtKB"/>
</dbReference>
<dbReference type="GO" id="GO:0004106">
    <property type="term" value="F:chorismate mutase activity"/>
    <property type="evidence" value="ECO:0000314"/>
    <property type="project" value="UniProtKB"/>
</dbReference>
<dbReference type="GO" id="GO:0046417">
    <property type="term" value="P:chorismate metabolic process"/>
    <property type="evidence" value="ECO:0000314"/>
    <property type="project" value="UniProtKB"/>
</dbReference>
<dbReference type="GO" id="GO:0009697">
    <property type="term" value="P:salicylic acid biosynthetic process"/>
    <property type="evidence" value="ECO:0007669"/>
    <property type="project" value="TreeGrafter"/>
</dbReference>
<dbReference type="FunFam" id="1.20.59.10:FF:000006">
    <property type="entry name" value="Chorismate mutase"/>
    <property type="match status" value="1"/>
</dbReference>
<dbReference type="Gene3D" id="1.20.59.10">
    <property type="entry name" value="Chorismate mutase"/>
    <property type="match status" value="1"/>
</dbReference>
<dbReference type="InterPro" id="IPR036263">
    <property type="entry name" value="Chorismate_II_sf"/>
</dbReference>
<dbReference type="InterPro" id="IPR051331">
    <property type="entry name" value="Chorismate_mutase-related"/>
</dbReference>
<dbReference type="InterPro" id="IPR008240">
    <property type="entry name" value="Chorismate_mutase_periplasmic"/>
</dbReference>
<dbReference type="InterPro" id="IPR036979">
    <property type="entry name" value="CM_dom_sf"/>
</dbReference>
<dbReference type="InterPro" id="IPR002701">
    <property type="entry name" value="CM_II_prokaryot"/>
</dbReference>
<dbReference type="NCBIfam" id="TIGR01806">
    <property type="entry name" value="CM_mono2"/>
    <property type="match status" value="1"/>
</dbReference>
<dbReference type="NCBIfam" id="NF005965">
    <property type="entry name" value="PRK08055.1"/>
    <property type="match status" value="1"/>
</dbReference>
<dbReference type="PANTHER" id="PTHR38041">
    <property type="entry name" value="CHORISMATE MUTASE"/>
    <property type="match status" value="1"/>
</dbReference>
<dbReference type="PANTHER" id="PTHR38041:SF2">
    <property type="entry name" value="SECRETED CHORISMATE MUTASE"/>
    <property type="match status" value="1"/>
</dbReference>
<dbReference type="Pfam" id="PF01817">
    <property type="entry name" value="CM_2"/>
    <property type="match status" value="1"/>
</dbReference>
<dbReference type="PIRSF" id="PIRSF026640">
    <property type="entry name" value="Peripl_chor_mut"/>
    <property type="match status" value="1"/>
</dbReference>
<dbReference type="SMART" id="SM00830">
    <property type="entry name" value="CM_2"/>
    <property type="match status" value="1"/>
</dbReference>
<dbReference type="SUPFAM" id="SSF48600">
    <property type="entry name" value="Chorismate mutase II"/>
    <property type="match status" value="1"/>
</dbReference>
<dbReference type="PROSITE" id="PS51168">
    <property type="entry name" value="CHORISMATE_MUT_2"/>
    <property type="match status" value="1"/>
</dbReference>
<keyword id="KW-0903">Direct protein sequencing</keyword>
<keyword id="KW-0413">Isomerase</keyword>
<keyword id="KW-0574">Periplasm</keyword>
<keyword id="KW-0732">Signal</keyword>